<proteinExistence type="inferred from homology"/>
<reference key="1">
    <citation type="journal article" date="1989" name="J. Bacteriol.">
        <title>Sequence and transcription mapping of Bacillus subtilis competence genes comB and comA, one of which is related to a family of bacterial regulatory determinants.</title>
        <authorList>
            <person name="Weinrauch Y."/>
            <person name="Guillen N."/>
            <person name="Dubnau D."/>
        </authorList>
    </citation>
    <scope>NUCLEOTIDE SEQUENCE [GENOMIC DNA]</scope>
</reference>
<reference key="2">
    <citation type="journal article" date="1997" name="Microbiology">
        <title>Analysis of the Bacillus subtilis genome: cloning and nucleotide sequence of a 62 kb region between 275 degrees (rrnB) and 284 degrees (pai).</title>
        <authorList>
            <person name="Oudega B."/>
            <person name="Koningstein G."/>
            <person name="Rodrigues L."/>
            <person name="de Sales Ramon M."/>
            <person name="Hilbert H."/>
            <person name="Duesterhoeft A."/>
            <person name="Pohl T.M."/>
            <person name="Weitzenegger T."/>
        </authorList>
    </citation>
    <scope>NUCLEOTIDE SEQUENCE [GENOMIC DNA]</scope>
    <source>
        <strain>168</strain>
    </source>
</reference>
<reference key="3">
    <citation type="journal article" date="1997" name="Nature">
        <title>The complete genome sequence of the Gram-positive bacterium Bacillus subtilis.</title>
        <authorList>
            <person name="Kunst F."/>
            <person name="Ogasawara N."/>
            <person name="Moszer I."/>
            <person name="Albertini A.M."/>
            <person name="Alloni G."/>
            <person name="Azevedo V."/>
            <person name="Bertero M.G."/>
            <person name="Bessieres P."/>
            <person name="Bolotin A."/>
            <person name="Borchert S."/>
            <person name="Borriss R."/>
            <person name="Boursier L."/>
            <person name="Brans A."/>
            <person name="Braun M."/>
            <person name="Brignell S.C."/>
            <person name="Bron S."/>
            <person name="Brouillet S."/>
            <person name="Bruschi C.V."/>
            <person name="Caldwell B."/>
            <person name="Capuano V."/>
            <person name="Carter N.M."/>
            <person name="Choi S.-K."/>
            <person name="Codani J.-J."/>
            <person name="Connerton I.F."/>
            <person name="Cummings N.J."/>
            <person name="Daniel R.A."/>
            <person name="Denizot F."/>
            <person name="Devine K.M."/>
            <person name="Duesterhoeft A."/>
            <person name="Ehrlich S.D."/>
            <person name="Emmerson P.T."/>
            <person name="Entian K.-D."/>
            <person name="Errington J."/>
            <person name="Fabret C."/>
            <person name="Ferrari E."/>
            <person name="Foulger D."/>
            <person name="Fritz C."/>
            <person name="Fujita M."/>
            <person name="Fujita Y."/>
            <person name="Fuma S."/>
            <person name="Galizzi A."/>
            <person name="Galleron N."/>
            <person name="Ghim S.-Y."/>
            <person name="Glaser P."/>
            <person name="Goffeau A."/>
            <person name="Golightly E.J."/>
            <person name="Grandi G."/>
            <person name="Guiseppi G."/>
            <person name="Guy B.J."/>
            <person name="Haga K."/>
            <person name="Haiech J."/>
            <person name="Harwood C.R."/>
            <person name="Henaut A."/>
            <person name="Hilbert H."/>
            <person name="Holsappel S."/>
            <person name="Hosono S."/>
            <person name="Hullo M.-F."/>
            <person name="Itaya M."/>
            <person name="Jones L.-M."/>
            <person name="Joris B."/>
            <person name="Karamata D."/>
            <person name="Kasahara Y."/>
            <person name="Klaerr-Blanchard M."/>
            <person name="Klein C."/>
            <person name="Kobayashi Y."/>
            <person name="Koetter P."/>
            <person name="Koningstein G."/>
            <person name="Krogh S."/>
            <person name="Kumano M."/>
            <person name="Kurita K."/>
            <person name="Lapidus A."/>
            <person name="Lardinois S."/>
            <person name="Lauber J."/>
            <person name="Lazarevic V."/>
            <person name="Lee S.-M."/>
            <person name="Levine A."/>
            <person name="Liu H."/>
            <person name="Masuda S."/>
            <person name="Mauel C."/>
            <person name="Medigue C."/>
            <person name="Medina N."/>
            <person name="Mellado R.P."/>
            <person name="Mizuno M."/>
            <person name="Moestl D."/>
            <person name="Nakai S."/>
            <person name="Noback M."/>
            <person name="Noone D."/>
            <person name="O'Reilly M."/>
            <person name="Ogawa K."/>
            <person name="Ogiwara A."/>
            <person name="Oudega B."/>
            <person name="Park S.-H."/>
            <person name="Parro V."/>
            <person name="Pohl T.M."/>
            <person name="Portetelle D."/>
            <person name="Porwollik S."/>
            <person name="Prescott A.M."/>
            <person name="Presecan E."/>
            <person name="Pujic P."/>
            <person name="Purnelle B."/>
            <person name="Rapoport G."/>
            <person name="Rey M."/>
            <person name="Reynolds S."/>
            <person name="Rieger M."/>
            <person name="Rivolta C."/>
            <person name="Rocha E."/>
            <person name="Roche B."/>
            <person name="Rose M."/>
            <person name="Sadaie Y."/>
            <person name="Sato T."/>
            <person name="Scanlan E."/>
            <person name="Schleich S."/>
            <person name="Schroeter R."/>
            <person name="Scoffone F."/>
            <person name="Sekiguchi J."/>
            <person name="Sekowska A."/>
            <person name="Seror S.J."/>
            <person name="Serror P."/>
            <person name="Shin B.-S."/>
            <person name="Soldo B."/>
            <person name="Sorokin A."/>
            <person name="Tacconi E."/>
            <person name="Takagi T."/>
            <person name="Takahashi H."/>
            <person name="Takemaru K."/>
            <person name="Takeuchi M."/>
            <person name="Tamakoshi A."/>
            <person name="Tanaka T."/>
            <person name="Terpstra P."/>
            <person name="Tognoni A."/>
            <person name="Tosato V."/>
            <person name="Uchiyama S."/>
            <person name="Vandenbol M."/>
            <person name="Vannier F."/>
            <person name="Vassarotti A."/>
            <person name="Viari A."/>
            <person name="Wambutt R."/>
            <person name="Wedler E."/>
            <person name="Wedler H."/>
            <person name="Weitzenegger T."/>
            <person name="Winters P."/>
            <person name="Wipat A."/>
            <person name="Yamamoto H."/>
            <person name="Yamane K."/>
            <person name="Yasumoto K."/>
            <person name="Yata K."/>
            <person name="Yoshida K."/>
            <person name="Yoshikawa H.-F."/>
            <person name="Zumstein E."/>
            <person name="Yoshikawa H."/>
            <person name="Danchin A."/>
        </authorList>
    </citation>
    <scope>NUCLEOTIDE SEQUENCE [LARGE SCALE GENOMIC DNA]</scope>
    <source>
        <strain>168</strain>
    </source>
</reference>
<reference key="4">
    <citation type="journal article" date="2009" name="Microbiology">
        <title>From a consortium sequence to a unified sequence: the Bacillus subtilis 168 reference genome a decade later.</title>
        <authorList>
            <person name="Barbe V."/>
            <person name="Cruveiller S."/>
            <person name="Kunst F."/>
            <person name="Lenoble P."/>
            <person name="Meurice G."/>
            <person name="Sekowska A."/>
            <person name="Vallenet D."/>
            <person name="Wang T."/>
            <person name="Moszer I."/>
            <person name="Medigue C."/>
            <person name="Danchin A."/>
        </authorList>
    </citation>
    <scope>SEQUENCE REVISION TO 54-55</scope>
</reference>
<keyword id="KW-0378">Hydrolase</keyword>
<keyword id="KW-1185">Reference proteome</keyword>
<dbReference type="EC" id="3.1.2.-"/>
<dbReference type="EMBL" id="AH000865">
    <property type="protein sequence ID" value="AAA22321.1"/>
    <property type="molecule type" value="Genomic_DNA"/>
</dbReference>
<dbReference type="EMBL" id="Z93932">
    <property type="protein sequence ID" value="CAB07905.1"/>
    <property type="molecule type" value="Genomic_DNA"/>
</dbReference>
<dbReference type="EMBL" id="AL009126">
    <property type="protein sequence ID" value="CAB15155.2"/>
    <property type="molecule type" value="Genomic_DNA"/>
</dbReference>
<dbReference type="PIR" id="B33591">
    <property type="entry name" value="B33591"/>
</dbReference>
<dbReference type="RefSeq" id="NP_391045.2">
    <property type="nucleotide sequence ID" value="NC_000964.3"/>
</dbReference>
<dbReference type="RefSeq" id="WP_003228810.1">
    <property type="nucleotide sequence ID" value="NZ_OZ025638.1"/>
</dbReference>
<dbReference type="SMR" id="P14205"/>
<dbReference type="FunCoup" id="P14205">
    <property type="interactions" value="43"/>
</dbReference>
<dbReference type="STRING" id="224308.BSU31670"/>
<dbReference type="PaxDb" id="224308-BSU31670"/>
<dbReference type="EnsemblBacteria" id="CAB15155">
    <property type="protein sequence ID" value="CAB15155"/>
    <property type="gene ID" value="BSU_31670"/>
</dbReference>
<dbReference type="GeneID" id="937178"/>
<dbReference type="KEGG" id="bsu:BSU31670"/>
<dbReference type="PATRIC" id="fig|224308.179.peg.3432"/>
<dbReference type="eggNOG" id="COG2050">
    <property type="taxonomic scope" value="Bacteria"/>
</dbReference>
<dbReference type="InParanoid" id="P14205"/>
<dbReference type="OrthoDB" id="9798208at2"/>
<dbReference type="PhylomeDB" id="P14205"/>
<dbReference type="BioCyc" id="BSUB:BSU31670-MONOMER"/>
<dbReference type="Proteomes" id="UP000001570">
    <property type="component" value="Chromosome"/>
</dbReference>
<dbReference type="GO" id="GO:0005829">
    <property type="term" value="C:cytosol"/>
    <property type="evidence" value="ECO:0000318"/>
    <property type="project" value="GO_Central"/>
</dbReference>
<dbReference type="GO" id="GO:0061522">
    <property type="term" value="F:1,4-dihydroxy-2-naphthoyl-CoA thioesterase activity"/>
    <property type="evidence" value="ECO:0000318"/>
    <property type="project" value="GO_Central"/>
</dbReference>
<dbReference type="CDD" id="cd03443">
    <property type="entry name" value="PaaI_thioesterase"/>
    <property type="match status" value="1"/>
</dbReference>
<dbReference type="FunFam" id="3.10.129.10:FF:000018">
    <property type="entry name" value="ComA operon protein"/>
    <property type="match status" value="1"/>
</dbReference>
<dbReference type="Gene3D" id="3.10.129.10">
    <property type="entry name" value="Hotdog Thioesterase"/>
    <property type="match status" value="1"/>
</dbReference>
<dbReference type="InterPro" id="IPR029069">
    <property type="entry name" value="HotDog_dom_sf"/>
</dbReference>
<dbReference type="InterPro" id="IPR003736">
    <property type="entry name" value="PAAI_dom"/>
</dbReference>
<dbReference type="InterPro" id="IPR006683">
    <property type="entry name" value="Thioestr_dom"/>
</dbReference>
<dbReference type="NCBIfam" id="TIGR00369">
    <property type="entry name" value="unchar_dom_1"/>
    <property type="match status" value="1"/>
</dbReference>
<dbReference type="PANTHER" id="PTHR43240">
    <property type="entry name" value="1,4-DIHYDROXY-2-NAPHTHOYL-COA THIOESTERASE 1"/>
    <property type="match status" value="1"/>
</dbReference>
<dbReference type="PANTHER" id="PTHR43240:SF5">
    <property type="entry name" value="1,4-DIHYDROXY-2-NAPHTHOYL-COA THIOESTERASE 1"/>
    <property type="match status" value="1"/>
</dbReference>
<dbReference type="Pfam" id="PF03061">
    <property type="entry name" value="4HBT"/>
    <property type="match status" value="1"/>
</dbReference>
<dbReference type="SUPFAM" id="SSF54637">
    <property type="entry name" value="Thioesterase/thiol ester dehydrase-isomerase"/>
    <property type="match status" value="1"/>
</dbReference>
<gene>
    <name type="primary">yuxO</name>
    <name type="synonym">comA2</name>
    <name type="synonym">comAB</name>
    <name type="ordered locus">BSU31670</name>
</gene>
<protein>
    <recommendedName>
        <fullName>Putative esterase ComA2</fullName>
        <ecNumber>3.1.2.-</ecNumber>
    </recommendedName>
    <alternativeName>
        <fullName>ComA operon protein 2</fullName>
    </alternativeName>
</protein>
<accession>P14205</accession>
<sequence>MDMKHTLLEALGIEIVENTAERCVAVMPVDHRTVQPFGYLHGGASVALAETAASAGAQNLIDHTTQACVGLEINANHLKSVKEGTVKAIAEPVHIGRTTIVYHIHIYDEQERLICISRCTLAVIKK</sequence>
<organism>
    <name type="scientific">Bacillus subtilis (strain 168)</name>
    <dbReference type="NCBI Taxonomy" id="224308"/>
    <lineage>
        <taxon>Bacteria</taxon>
        <taxon>Bacillati</taxon>
        <taxon>Bacillota</taxon>
        <taxon>Bacilli</taxon>
        <taxon>Bacillales</taxon>
        <taxon>Bacillaceae</taxon>
        <taxon>Bacillus</taxon>
    </lineage>
</organism>
<feature type="chain" id="PRO_0000156679" description="Putative esterase ComA2">
    <location>
        <begin position="1"/>
        <end position="126"/>
    </location>
</feature>
<feature type="sequence conflict" description="In Ref. 1; AAA22321 and 2; CAB07905." evidence="1" ref="1 2">
    <original>SA</original>
    <variation>RP</variation>
    <location>
        <begin position="54"/>
        <end position="55"/>
    </location>
</feature>
<name>COMA2_BACSU</name>
<evidence type="ECO:0000305" key="1"/>
<comment type="function">
    <text>Is not required for competence.</text>
</comment>
<comment type="similarity">
    <text evidence="1">Belongs to the thioesterase PaaI family.</text>
</comment>